<evidence type="ECO:0000255" key="1">
    <source>
        <dbReference type="HAMAP-Rule" id="MF_01358"/>
    </source>
</evidence>
<protein>
    <recommendedName>
        <fullName evidence="1">NADH-quinone oxidoreductase subunit D</fullName>
        <ecNumber evidence="1">7.1.1.-</ecNumber>
    </recommendedName>
    <alternativeName>
        <fullName evidence="1">NADH dehydrogenase I subunit D</fullName>
    </alternativeName>
    <alternativeName>
        <fullName evidence="1">NDH-1 subunit D</fullName>
    </alternativeName>
</protein>
<feature type="chain" id="PRO_0000118621" description="NADH-quinone oxidoreductase subunit D">
    <location>
        <begin position="1"/>
        <end position="440"/>
    </location>
</feature>
<comment type="function">
    <text evidence="1">NDH-1 shuttles electrons from NADH, via FMN and iron-sulfur (Fe-S) centers, to quinones in the respiratory chain. The immediate electron acceptor for the enzyme in this species is believed to be a menaquinone. Couples the redox reaction to proton translocation (for every two electrons transferred, four hydrogen ions are translocated across the cytoplasmic membrane), and thus conserves the redox energy in a proton gradient.</text>
</comment>
<comment type="catalytic activity">
    <reaction evidence="1">
        <text>a quinone + NADH + 5 H(+)(in) = a quinol + NAD(+) + 4 H(+)(out)</text>
        <dbReference type="Rhea" id="RHEA:57888"/>
        <dbReference type="ChEBI" id="CHEBI:15378"/>
        <dbReference type="ChEBI" id="CHEBI:24646"/>
        <dbReference type="ChEBI" id="CHEBI:57540"/>
        <dbReference type="ChEBI" id="CHEBI:57945"/>
        <dbReference type="ChEBI" id="CHEBI:132124"/>
    </reaction>
</comment>
<comment type="subunit">
    <text evidence="1">NDH-1 is composed of 14 different subunits. Subunits NuoB, C, D, E, F, and G constitute the peripheral sector of the complex.</text>
</comment>
<comment type="subcellular location">
    <subcellularLocation>
        <location evidence="1">Cell membrane</location>
        <topology evidence="1">Peripheral membrane protein</topology>
        <orientation evidence="1">Cytoplasmic side</orientation>
    </subcellularLocation>
</comment>
<comment type="similarity">
    <text evidence="1">Belongs to the complex I 49 kDa subunit family.</text>
</comment>
<gene>
    <name evidence="1" type="primary">nuoD</name>
    <name type="ordered locus">BQ2027_MB3172</name>
</gene>
<accession>P65570</accession>
<accession>A0A1R3Y381</accession>
<accession>P95178</accession>
<accession>X2BMR2</accession>
<organism>
    <name type="scientific">Mycobacterium bovis (strain ATCC BAA-935 / AF2122/97)</name>
    <dbReference type="NCBI Taxonomy" id="233413"/>
    <lineage>
        <taxon>Bacteria</taxon>
        <taxon>Bacillati</taxon>
        <taxon>Actinomycetota</taxon>
        <taxon>Actinomycetes</taxon>
        <taxon>Mycobacteriales</taxon>
        <taxon>Mycobacteriaceae</taxon>
        <taxon>Mycobacterium</taxon>
        <taxon>Mycobacterium tuberculosis complex</taxon>
    </lineage>
</organism>
<proteinExistence type="inferred from homology"/>
<name>NUOD_MYCBO</name>
<sequence length="440" mass="48164">MTAIADSAGGAGETVLVAGGQDWQQVVDAARSADPGERIVVNMGPQHPSTHGVLRLILEIEGETVVEARCGIGYLHTGIEKNLEYRYWTQGVTFVTRMDYLSPFFNETAYCLGVEKLLGITDEIPERVNVIRVLMMELNRISSHLVALATGGMELGAMTPMFVGFRAREIVLTLFEKITGLRMNSAYIRPGGVAQDLPPNAATEIAEALKQLRQPLREMGELLNENAIWKARTQGVGYLDLTGCMALGITGPILRSTGLPHDLRKSEPYCGYQHYEFDVITDDSCDAYGRYMIRVKEMWESMKIVEQCLDKLRPGPTMISDRKLAWPADLQVGPDGLGNSPKHIAKIMGSSMEALIHHFKLVTEGIRVPAGQVYVAVESPRGELGVHMVSDGGTRPYRVHYRDPSFTNLQSVAAMCEGGMVADLIAAVASIDPVMGGVDR</sequence>
<keyword id="KW-1003">Cell membrane</keyword>
<keyword id="KW-0472">Membrane</keyword>
<keyword id="KW-0520">NAD</keyword>
<keyword id="KW-0874">Quinone</keyword>
<keyword id="KW-1185">Reference proteome</keyword>
<keyword id="KW-1278">Translocase</keyword>
<keyword id="KW-0813">Transport</keyword>
<dbReference type="EC" id="7.1.1.-" evidence="1"/>
<dbReference type="EMBL" id="LT708304">
    <property type="protein sequence ID" value="SIU01799.1"/>
    <property type="molecule type" value="Genomic_DNA"/>
</dbReference>
<dbReference type="RefSeq" id="NP_856817.1">
    <property type="nucleotide sequence ID" value="NC_002945.3"/>
</dbReference>
<dbReference type="RefSeq" id="WP_003416430.1">
    <property type="nucleotide sequence ID" value="NC_002945.4"/>
</dbReference>
<dbReference type="SMR" id="P65570"/>
<dbReference type="GeneID" id="45427135"/>
<dbReference type="KEGG" id="mbo:BQ2027_MB3172"/>
<dbReference type="PATRIC" id="fig|233413.5.peg.3490"/>
<dbReference type="Proteomes" id="UP000001419">
    <property type="component" value="Chromosome"/>
</dbReference>
<dbReference type="GO" id="GO:0005886">
    <property type="term" value="C:plasma membrane"/>
    <property type="evidence" value="ECO:0007669"/>
    <property type="project" value="UniProtKB-SubCell"/>
</dbReference>
<dbReference type="GO" id="GO:0051287">
    <property type="term" value="F:NAD binding"/>
    <property type="evidence" value="ECO:0007669"/>
    <property type="project" value="InterPro"/>
</dbReference>
<dbReference type="GO" id="GO:0050136">
    <property type="term" value="F:NADH:ubiquinone reductase (non-electrogenic) activity"/>
    <property type="evidence" value="ECO:0007669"/>
    <property type="project" value="UniProtKB-UniRule"/>
</dbReference>
<dbReference type="GO" id="GO:0048038">
    <property type="term" value="F:quinone binding"/>
    <property type="evidence" value="ECO:0007669"/>
    <property type="project" value="UniProtKB-KW"/>
</dbReference>
<dbReference type="FunFam" id="1.10.645.10:FF:000005">
    <property type="entry name" value="NADH-quinone oxidoreductase subunit D"/>
    <property type="match status" value="1"/>
</dbReference>
<dbReference type="Gene3D" id="1.10.645.10">
    <property type="entry name" value="Cytochrome-c3 Hydrogenase, chain B"/>
    <property type="match status" value="1"/>
</dbReference>
<dbReference type="HAMAP" id="MF_01358">
    <property type="entry name" value="NDH1_NuoD"/>
    <property type="match status" value="1"/>
</dbReference>
<dbReference type="InterPro" id="IPR001135">
    <property type="entry name" value="NADH_Q_OxRdtase_suD"/>
</dbReference>
<dbReference type="InterPro" id="IPR014029">
    <property type="entry name" value="NADH_UbQ_OxRdtase_49kDa_CS"/>
</dbReference>
<dbReference type="InterPro" id="IPR022885">
    <property type="entry name" value="NDH1_su_D/H"/>
</dbReference>
<dbReference type="InterPro" id="IPR029014">
    <property type="entry name" value="NiFe-Hase_large"/>
</dbReference>
<dbReference type="NCBIfam" id="TIGR01962">
    <property type="entry name" value="NuoD"/>
    <property type="match status" value="1"/>
</dbReference>
<dbReference type="NCBIfam" id="NF004739">
    <property type="entry name" value="PRK06075.1"/>
    <property type="match status" value="1"/>
</dbReference>
<dbReference type="PANTHER" id="PTHR11993:SF10">
    <property type="entry name" value="NADH DEHYDROGENASE [UBIQUINONE] IRON-SULFUR PROTEIN 2, MITOCHONDRIAL"/>
    <property type="match status" value="1"/>
</dbReference>
<dbReference type="PANTHER" id="PTHR11993">
    <property type="entry name" value="NADH-UBIQUINONE OXIDOREDUCTASE 49 KDA SUBUNIT"/>
    <property type="match status" value="1"/>
</dbReference>
<dbReference type="Pfam" id="PF00346">
    <property type="entry name" value="Complex1_49kDa"/>
    <property type="match status" value="1"/>
</dbReference>
<dbReference type="SUPFAM" id="SSF56762">
    <property type="entry name" value="HydB/Nqo4-like"/>
    <property type="match status" value="1"/>
</dbReference>
<dbReference type="PROSITE" id="PS00535">
    <property type="entry name" value="COMPLEX1_49K"/>
    <property type="match status" value="1"/>
</dbReference>
<reference key="1">
    <citation type="journal article" date="2003" name="Proc. Natl. Acad. Sci. U.S.A.">
        <title>The complete genome sequence of Mycobacterium bovis.</title>
        <authorList>
            <person name="Garnier T."/>
            <person name="Eiglmeier K."/>
            <person name="Camus J.-C."/>
            <person name="Medina N."/>
            <person name="Mansoor H."/>
            <person name="Pryor M."/>
            <person name="Duthoy S."/>
            <person name="Grondin S."/>
            <person name="Lacroix C."/>
            <person name="Monsempe C."/>
            <person name="Simon S."/>
            <person name="Harris B."/>
            <person name="Atkin R."/>
            <person name="Doggett J."/>
            <person name="Mayes R."/>
            <person name="Keating L."/>
            <person name="Wheeler P.R."/>
            <person name="Parkhill J."/>
            <person name="Barrell B.G."/>
            <person name="Cole S.T."/>
            <person name="Gordon S.V."/>
            <person name="Hewinson R.G."/>
        </authorList>
    </citation>
    <scope>NUCLEOTIDE SEQUENCE [LARGE SCALE GENOMIC DNA]</scope>
    <source>
        <strain>ATCC BAA-935 / AF2122/97</strain>
    </source>
</reference>
<reference key="2">
    <citation type="journal article" date="2017" name="Genome Announc.">
        <title>Updated reference genome sequence and annotation of Mycobacterium bovis AF2122/97.</title>
        <authorList>
            <person name="Malone K.M."/>
            <person name="Farrell D."/>
            <person name="Stuber T.P."/>
            <person name="Schubert O.T."/>
            <person name="Aebersold R."/>
            <person name="Robbe-Austerman S."/>
            <person name="Gordon S.V."/>
        </authorList>
    </citation>
    <scope>NUCLEOTIDE SEQUENCE [LARGE SCALE GENOMIC DNA]</scope>
    <scope>GENOME REANNOTATION</scope>
    <source>
        <strain>ATCC BAA-935 / AF2122/97</strain>
    </source>
</reference>